<keyword id="KW-0175">Coiled coil</keyword>
<keyword id="KW-0472">Membrane</keyword>
<keyword id="KW-0496">Mitochondrion</keyword>
<keyword id="KW-0999">Mitochondrion inner membrane</keyword>
<keyword id="KW-1185">Reference proteome</keyword>
<keyword id="KW-0735">Signal-anchor</keyword>
<keyword id="KW-0812">Transmembrane</keyword>
<keyword id="KW-1133">Transmembrane helix</keyword>
<dbReference type="EMBL" id="X87941">
    <property type="protein sequence ID" value="CAA61181.1"/>
    <property type="status" value="ALT_FRAME"/>
    <property type="molecule type" value="Genomic_DNA"/>
</dbReference>
<dbReference type="EMBL" id="Z73016">
    <property type="protein sequence ID" value="CAA97259.1"/>
    <property type="status" value="ALT_FRAME"/>
    <property type="molecule type" value="Genomic_DNA"/>
</dbReference>
<dbReference type="EMBL" id="BK006941">
    <property type="protein sequence ID" value="DAA08322.1"/>
    <property type="molecule type" value="Genomic_DNA"/>
</dbReference>
<dbReference type="PIR" id="S57696">
    <property type="entry name" value="S57696"/>
</dbReference>
<dbReference type="RefSeq" id="NP_011747.2">
    <property type="nucleotide sequence ID" value="NM_001181360.1"/>
</dbReference>
<dbReference type="SMR" id="P50085"/>
<dbReference type="BioGRID" id="33483">
    <property type="interactions" value="562"/>
</dbReference>
<dbReference type="ComplexPortal" id="CPX-1703">
    <property type="entry name" value="Prohibitin complex"/>
</dbReference>
<dbReference type="FunCoup" id="P50085">
    <property type="interactions" value="1083"/>
</dbReference>
<dbReference type="IntAct" id="P50085">
    <property type="interactions" value="69"/>
</dbReference>
<dbReference type="MINT" id="P50085"/>
<dbReference type="STRING" id="4932.YGR231C"/>
<dbReference type="iPTMnet" id="P50085"/>
<dbReference type="PaxDb" id="4932-YGR231C"/>
<dbReference type="PeptideAtlas" id="P50085"/>
<dbReference type="EnsemblFungi" id="YGR231C_mRNA">
    <property type="protein sequence ID" value="YGR231C"/>
    <property type="gene ID" value="YGR231C"/>
</dbReference>
<dbReference type="GeneID" id="853146"/>
<dbReference type="KEGG" id="sce:YGR231C"/>
<dbReference type="AGR" id="SGD:S000003463"/>
<dbReference type="SGD" id="S000003463">
    <property type="gene designation" value="PHB2"/>
</dbReference>
<dbReference type="VEuPathDB" id="FungiDB:YGR231C"/>
<dbReference type="eggNOG" id="KOG3090">
    <property type="taxonomic scope" value="Eukaryota"/>
</dbReference>
<dbReference type="GeneTree" id="ENSGT00950000183070"/>
<dbReference type="HOGENOM" id="CLU_047969_0_2_1"/>
<dbReference type="InParanoid" id="P50085"/>
<dbReference type="OMA" id="NEGTHFQ"/>
<dbReference type="OrthoDB" id="275637at2759"/>
<dbReference type="BioCyc" id="YEAST:G3O-30909-MONOMER"/>
<dbReference type="BioGRID-ORCS" id="853146">
    <property type="hits" value="1 hit in 10 CRISPR screens"/>
</dbReference>
<dbReference type="PRO" id="PR:P50085"/>
<dbReference type="Proteomes" id="UP000002311">
    <property type="component" value="Chromosome VII"/>
</dbReference>
<dbReference type="RNAct" id="P50085">
    <property type="molecule type" value="protein"/>
</dbReference>
<dbReference type="GO" id="GO:0005743">
    <property type="term" value="C:mitochondrial inner membrane"/>
    <property type="evidence" value="ECO:0000314"/>
    <property type="project" value="SGD"/>
</dbReference>
<dbReference type="GO" id="GO:0035632">
    <property type="term" value="C:mitochondrial prohibitin complex"/>
    <property type="evidence" value="ECO:0000353"/>
    <property type="project" value="ComplexPortal"/>
</dbReference>
<dbReference type="GO" id="GO:0005739">
    <property type="term" value="C:mitochondrion"/>
    <property type="evidence" value="ECO:0000314"/>
    <property type="project" value="SGD"/>
</dbReference>
<dbReference type="GO" id="GO:0000001">
    <property type="term" value="P:mitochondrion inheritance"/>
    <property type="evidence" value="ECO:0000315"/>
    <property type="project" value="SGD"/>
</dbReference>
<dbReference type="GO" id="GO:0007005">
    <property type="term" value="P:mitochondrion organization"/>
    <property type="evidence" value="ECO:0000318"/>
    <property type="project" value="GO_Central"/>
</dbReference>
<dbReference type="GO" id="GO:0000423">
    <property type="term" value="P:mitophagy"/>
    <property type="evidence" value="ECO:0000315"/>
    <property type="project" value="UniProtKB"/>
</dbReference>
<dbReference type="GO" id="GO:0045861">
    <property type="term" value="P:negative regulation of proteolysis"/>
    <property type="evidence" value="ECO:0000315"/>
    <property type="project" value="SGD"/>
</dbReference>
<dbReference type="GO" id="GO:0006457">
    <property type="term" value="P:protein folding"/>
    <property type="evidence" value="ECO:0000314"/>
    <property type="project" value="SGD"/>
</dbReference>
<dbReference type="GO" id="GO:0050821">
    <property type="term" value="P:protein stabilization"/>
    <property type="evidence" value="ECO:0000303"/>
    <property type="project" value="ComplexPortal"/>
</dbReference>
<dbReference type="GO" id="GO:0061753">
    <property type="term" value="P:substrate localization to autophagosome"/>
    <property type="evidence" value="ECO:0007669"/>
    <property type="project" value="GOC"/>
</dbReference>
<dbReference type="CDD" id="cd03401">
    <property type="entry name" value="SPFH_prohibitin"/>
    <property type="match status" value="1"/>
</dbReference>
<dbReference type="FunFam" id="3.30.479.30:FF:000001">
    <property type="entry name" value="Prohibitin 2"/>
    <property type="match status" value="1"/>
</dbReference>
<dbReference type="Gene3D" id="3.30.479.30">
    <property type="entry name" value="Band 7 domain"/>
    <property type="match status" value="1"/>
</dbReference>
<dbReference type="InterPro" id="IPR001107">
    <property type="entry name" value="Band_7"/>
</dbReference>
<dbReference type="InterPro" id="IPR036013">
    <property type="entry name" value="Band_7/SPFH_dom_sf"/>
</dbReference>
<dbReference type="InterPro" id="IPR000163">
    <property type="entry name" value="Prohibitin"/>
</dbReference>
<dbReference type="PANTHER" id="PTHR23222">
    <property type="entry name" value="PROHIBITIN"/>
    <property type="match status" value="1"/>
</dbReference>
<dbReference type="PANTHER" id="PTHR23222:SF1">
    <property type="entry name" value="PROHIBITIN-2"/>
    <property type="match status" value="1"/>
</dbReference>
<dbReference type="Pfam" id="PF01145">
    <property type="entry name" value="Band_7"/>
    <property type="match status" value="1"/>
</dbReference>
<dbReference type="PRINTS" id="PR00679">
    <property type="entry name" value="PROHIBITIN"/>
</dbReference>
<dbReference type="SMART" id="SM00244">
    <property type="entry name" value="PHB"/>
    <property type="match status" value="1"/>
</dbReference>
<dbReference type="SUPFAM" id="SSF117892">
    <property type="entry name" value="Band 7/SPFH domain"/>
    <property type="match status" value="1"/>
</dbReference>
<reference key="1">
    <citation type="journal article" date="1996" name="Yeast">
        <title>Sequence analysis of the 43 kb CRM1-YLM9-PET54-DIE2-SMI1-PHO81-YHB4-PFK1 region from the right arm of Saccharomyces cerevisiae chromosome VII.</title>
        <authorList>
            <person name="van der Aart Q.J.M."/>
            <person name="Kleine K."/>
            <person name="Steensma H.Y."/>
        </authorList>
    </citation>
    <scope>NUCLEOTIDE SEQUENCE [GENOMIC DNA]</scope>
    <source>
        <strain>ATCC 204508 / S288c</strain>
    </source>
</reference>
<reference key="2">
    <citation type="journal article" date="1997" name="Nature">
        <title>The nucleotide sequence of Saccharomyces cerevisiae chromosome VII.</title>
        <authorList>
            <person name="Tettelin H."/>
            <person name="Agostoni-Carbone M.L."/>
            <person name="Albermann K."/>
            <person name="Albers M."/>
            <person name="Arroyo J."/>
            <person name="Backes U."/>
            <person name="Barreiros T."/>
            <person name="Bertani I."/>
            <person name="Bjourson A.J."/>
            <person name="Brueckner M."/>
            <person name="Bruschi C.V."/>
            <person name="Carignani G."/>
            <person name="Castagnoli L."/>
            <person name="Cerdan E."/>
            <person name="Clemente M.L."/>
            <person name="Coblenz A."/>
            <person name="Coglievina M."/>
            <person name="Coissac E."/>
            <person name="Defoor E."/>
            <person name="Del Bino S."/>
            <person name="Delius H."/>
            <person name="Delneri D."/>
            <person name="de Wergifosse P."/>
            <person name="Dujon B."/>
            <person name="Durand P."/>
            <person name="Entian K.-D."/>
            <person name="Eraso P."/>
            <person name="Escribano V."/>
            <person name="Fabiani L."/>
            <person name="Fartmann B."/>
            <person name="Feroli F."/>
            <person name="Feuermann M."/>
            <person name="Frontali L."/>
            <person name="Garcia-Gonzalez M."/>
            <person name="Garcia-Saez M.I."/>
            <person name="Goffeau A."/>
            <person name="Guerreiro P."/>
            <person name="Hani J."/>
            <person name="Hansen M."/>
            <person name="Hebling U."/>
            <person name="Hernandez K."/>
            <person name="Heumann K."/>
            <person name="Hilger F."/>
            <person name="Hofmann B."/>
            <person name="Indge K.J."/>
            <person name="James C.M."/>
            <person name="Klima R."/>
            <person name="Koetter P."/>
            <person name="Kramer B."/>
            <person name="Kramer W."/>
            <person name="Lauquin G."/>
            <person name="Leuther H."/>
            <person name="Louis E.J."/>
            <person name="Maillier E."/>
            <person name="Marconi A."/>
            <person name="Martegani E."/>
            <person name="Mazon M.J."/>
            <person name="Mazzoni C."/>
            <person name="McReynolds A.D.K."/>
            <person name="Melchioretto P."/>
            <person name="Mewes H.-W."/>
            <person name="Minenkova O."/>
            <person name="Mueller-Auer S."/>
            <person name="Nawrocki A."/>
            <person name="Netter P."/>
            <person name="Neu R."/>
            <person name="Nombela C."/>
            <person name="Oliver S.G."/>
            <person name="Panzeri L."/>
            <person name="Paoluzi S."/>
            <person name="Plevani P."/>
            <person name="Portetelle D."/>
            <person name="Portillo F."/>
            <person name="Potier S."/>
            <person name="Purnelle B."/>
            <person name="Rieger M."/>
            <person name="Riles L."/>
            <person name="Rinaldi T."/>
            <person name="Robben J."/>
            <person name="Rodrigues-Pousada C."/>
            <person name="Rodriguez-Belmonte E."/>
            <person name="Rodriguez-Torres A.M."/>
            <person name="Rose M."/>
            <person name="Ruzzi M."/>
            <person name="Saliola M."/>
            <person name="Sanchez-Perez M."/>
            <person name="Schaefer B."/>
            <person name="Schaefer M."/>
            <person name="Scharfe M."/>
            <person name="Schmidheini T."/>
            <person name="Schreer A."/>
            <person name="Skala J."/>
            <person name="Souciet J.-L."/>
            <person name="Steensma H.Y."/>
            <person name="Talla E."/>
            <person name="Thierry A."/>
            <person name="Vandenbol M."/>
            <person name="van der Aart Q.J.M."/>
            <person name="Van Dyck L."/>
            <person name="Vanoni M."/>
            <person name="Verhasselt P."/>
            <person name="Voet M."/>
            <person name="Volckaert G."/>
            <person name="Wambutt R."/>
            <person name="Watson M.D."/>
            <person name="Weber N."/>
            <person name="Wedler E."/>
            <person name="Wedler H."/>
            <person name="Wipfli P."/>
            <person name="Wolf K."/>
            <person name="Wright L.F."/>
            <person name="Zaccaria P."/>
            <person name="Zimmermann M."/>
            <person name="Zollner A."/>
            <person name="Kleine K."/>
        </authorList>
    </citation>
    <scope>NUCLEOTIDE SEQUENCE [LARGE SCALE GENOMIC DNA]</scope>
    <source>
        <strain>ATCC 204508 / S288c</strain>
    </source>
</reference>
<reference key="3">
    <citation type="journal article" date="2014" name="G3 (Bethesda)">
        <title>The reference genome sequence of Saccharomyces cerevisiae: Then and now.</title>
        <authorList>
            <person name="Engel S.R."/>
            <person name="Dietrich F.S."/>
            <person name="Fisk D.G."/>
            <person name="Binkley G."/>
            <person name="Balakrishnan R."/>
            <person name="Costanzo M.C."/>
            <person name="Dwight S.S."/>
            <person name="Hitz B.C."/>
            <person name="Karra K."/>
            <person name="Nash R.S."/>
            <person name="Weng S."/>
            <person name="Wong E.D."/>
            <person name="Lloyd P."/>
            <person name="Skrzypek M.S."/>
            <person name="Miyasato S.R."/>
            <person name="Simison M."/>
            <person name="Cherry J.M."/>
        </authorList>
    </citation>
    <scope>GENOME REANNOTATION</scope>
    <source>
        <strain>ATCC 204508 / S288c</strain>
    </source>
</reference>
<reference key="4">
    <citation type="journal article" date="1999" name="Mol. Cell. Biol.">
        <title>Prohibitins regulate membrane protein degradation by the m-AAA protease in mitochondria.</title>
        <authorList>
            <person name="Steglich G."/>
            <person name="Neupert W."/>
            <person name="Langer T."/>
        </authorList>
    </citation>
    <scope>FUNCTION</scope>
    <scope>SUBCELLULAR LOCATION</scope>
    <scope>INTERACTION WITH THE M-AAA PROTEASE COMPLEX</scope>
</reference>
<reference key="5">
    <citation type="journal article" date="2000" name="EMBO J.">
        <title>Prohibitins act as a membrane-bound chaperone for the stabilization of mitochondrial proteins.</title>
        <authorList>
            <person name="Nijtmans L.G.J."/>
            <person name="de Jong L."/>
            <person name="Artal-Sanz M."/>
            <person name="Coates P.J."/>
            <person name="Berden J.A."/>
            <person name="Back J.W."/>
            <person name="Muijsers A.O."/>
            <person name="van der Spek H."/>
            <person name="Grivell L.A."/>
        </authorList>
    </citation>
    <scope>FUNCTION</scope>
    <scope>SUBUNIT</scope>
</reference>
<reference key="6">
    <citation type="journal article" date="2002" name="Protein Sci.">
        <title>A structure for the yeast prohibitin complex: structure prediction and evidence from chemical crosslinking and mass spectrometry.</title>
        <authorList>
            <person name="Back J.W."/>
            <person name="Artal-Sanz M."/>
            <person name="De Jong L."/>
            <person name="De Koning L.J."/>
            <person name="Nijtmans L.G.J."/>
            <person name="De Koster C.G."/>
            <person name="Grivell L.A."/>
            <person name="Van Der Spek H."/>
            <person name="Muijsers A.O."/>
        </authorList>
    </citation>
    <scope>SUBUNIT</scope>
</reference>
<reference key="7">
    <citation type="journal article" date="2003" name="Nature">
        <title>Sequencing and comparison of yeast species to identify genes and regulatory elements.</title>
        <authorList>
            <person name="Kellis M."/>
            <person name="Patterson N."/>
            <person name="Endrizzi M."/>
            <person name="Birren B.W."/>
            <person name="Lander E.S."/>
        </authorList>
    </citation>
    <scope>IDENTIFICATION OF FRAMESHIFT</scope>
</reference>
<reference key="8">
    <citation type="journal article" date="2003" name="Nature">
        <title>Global analysis of protein localization in budding yeast.</title>
        <authorList>
            <person name="Huh W.-K."/>
            <person name="Falvo J.V."/>
            <person name="Gerke L.C."/>
            <person name="Carroll A.S."/>
            <person name="Howson R.W."/>
            <person name="Weissman J.S."/>
            <person name="O'Shea E.K."/>
        </authorList>
    </citation>
    <scope>SUBCELLULAR LOCATION [LARGE SCALE ANALYSIS]</scope>
</reference>
<reference key="9">
    <citation type="journal article" date="2003" name="Nature">
        <title>Global analysis of protein expression in yeast.</title>
        <authorList>
            <person name="Ghaemmaghami S."/>
            <person name="Huh W.-K."/>
            <person name="Bower K."/>
            <person name="Howson R.W."/>
            <person name="Belle A."/>
            <person name="Dephoure N."/>
            <person name="O'Shea E.K."/>
            <person name="Weissman J.S."/>
        </authorList>
    </citation>
    <scope>LEVEL OF PROTEIN EXPRESSION [LARGE SCALE ANALYSIS]</scope>
</reference>
<reference key="10">
    <citation type="journal article" date="2003" name="Proc. Natl. Acad. Sci. U.S.A.">
        <title>The proteome of Saccharomyces cerevisiae mitochondria.</title>
        <authorList>
            <person name="Sickmann A."/>
            <person name="Reinders J."/>
            <person name="Wagner Y."/>
            <person name="Joppich C."/>
            <person name="Zahedi R.P."/>
            <person name="Meyer H.E."/>
            <person name="Schoenfisch B."/>
            <person name="Perschil I."/>
            <person name="Chacinska A."/>
            <person name="Guiard B."/>
            <person name="Rehling P."/>
            <person name="Pfanner N."/>
            <person name="Meisinger C."/>
        </authorList>
    </citation>
    <scope>SUBCELLULAR LOCATION [LARGE SCALE ANALYSIS]</scope>
    <source>
        <strain>ATCC 76625 / YPH499</strain>
    </source>
</reference>
<reference key="11">
    <citation type="journal article" date="2024" name="Autophagy">
        <title>Prohibitins, Phb1 and Phb2, function as Atg8 receptors to support yeast mitophagy and also play a negative regulatory role in Atg32 processing.</title>
        <authorList>
            <person name="Garcia-Chavez D."/>
            <person name="Dominguez-Martin E."/>
            <person name="Kawasaki L."/>
            <person name="Ongay-Larios L."/>
            <person name="Ruelas-Ramirez H."/>
            <person name="Mendoza-Martinez A.E."/>
            <person name="Pardo J.P."/>
            <person name="Funes S."/>
            <person name="Coria R."/>
        </authorList>
    </citation>
    <scope>FUNCTION</scope>
    <scope>INTERACTION WITH ATG8</scope>
    <scope>SUBCELLULAR LOCATION</scope>
    <scope>DISRUPTION PHENOTYPE</scope>
    <scope>MUTAGENESIS OF 138-TYR--LEU-141</scope>
</reference>
<reference key="12">
    <citation type="journal article" date="2005" name="Mol. Biol. Cell">
        <title>Formation of membrane-bound ring complexes by prohibitins in mitochondria.</title>
        <authorList>
            <person name="Tatsuta T."/>
            <person name="Model K."/>
            <person name="Langer T."/>
        </authorList>
    </citation>
    <scope>SINGLE PARTICLE ELECTRON MICROSCOPY</scope>
    <scope>SUBCELLULAR LOCATION</scope>
    <scope>COILED-COIL DOMAIN</scope>
</reference>
<gene>
    <name type="primary">PHB2</name>
    <name type="ordered locus">YGR231C</name>
    <name type="ORF">G8561</name>
</gene>
<organism>
    <name type="scientific">Saccharomyces cerevisiae (strain ATCC 204508 / S288c)</name>
    <name type="common">Baker's yeast</name>
    <dbReference type="NCBI Taxonomy" id="559292"/>
    <lineage>
        <taxon>Eukaryota</taxon>
        <taxon>Fungi</taxon>
        <taxon>Dikarya</taxon>
        <taxon>Ascomycota</taxon>
        <taxon>Saccharomycotina</taxon>
        <taxon>Saccharomycetes</taxon>
        <taxon>Saccharomycetales</taxon>
        <taxon>Saccharomycetaceae</taxon>
        <taxon>Saccharomyces</taxon>
    </lineage>
</organism>
<feature type="chain" id="PRO_0000213888" description="Prohibitin-2">
    <location>
        <begin position="1"/>
        <end position="310"/>
    </location>
</feature>
<feature type="transmembrane region" description="Helical; Signal-anchor for type II membrane protein" evidence="1">
    <location>
        <begin position="38"/>
        <end position="58"/>
    </location>
</feature>
<feature type="region of interest" description="Interaction with ATG8" evidence="9">
    <location>
        <begin position="130"/>
        <end position="144"/>
    </location>
</feature>
<feature type="coiled-coil region" evidence="8">
    <location>
        <begin position="212"/>
        <end position="253"/>
    </location>
</feature>
<feature type="short sequence motif" description="AIM" evidence="11">
    <location>
        <begin position="138"/>
        <end position="141"/>
    </location>
</feature>
<feature type="mutagenesis site" description="Impairs mitophagy." evidence="9">
    <original>YRTL</original>
    <variation>ARTA</variation>
    <location>
        <begin position="138"/>
        <end position="141"/>
    </location>
</feature>
<evidence type="ECO:0000255" key="1"/>
<evidence type="ECO:0000269" key="2">
    <source>
    </source>
</evidence>
<evidence type="ECO:0000269" key="3">
    <source>
    </source>
</evidence>
<evidence type="ECO:0000269" key="4">
    <source>
    </source>
</evidence>
<evidence type="ECO:0000269" key="5">
    <source>
    </source>
</evidence>
<evidence type="ECO:0000269" key="6">
    <source>
    </source>
</evidence>
<evidence type="ECO:0000269" key="7">
    <source>
    </source>
</evidence>
<evidence type="ECO:0000269" key="8">
    <source>
    </source>
</evidence>
<evidence type="ECO:0000269" key="9">
    <source>
    </source>
</evidence>
<evidence type="ECO:0000305" key="10"/>
<evidence type="ECO:0000305" key="11">
    <source>
    </source>
</evidence>
<sequence length="310" mass="34407">MNRSPGEFQRYAKAFQKQLSKVQQTGGRGQVPSPRGAFAGLGGLLLLGGGALFINNALFNVDGGHRAIVYSRIHGVSSRIFNEGTHFIFPWLDTPIIYDVRAKPRNVASLTGTKDLQMVNITCRVLSRPDVVQLPTIYRTLGQDYDERVLPSIVNEVLKAVVAQFNASQLITQREKVSRLIRENLVRRASKFNILLDDVSITYMTFSPEFTNAVEAKQIAQQDAQRAAFVVDKARQEKQGMVVRAQGEAKSAELIGEAIKKSRDYVELKRLDTARDIAKILASSPNRVILDNEALLLNTVVDARIDGRGK</sequence>
<proteinExistence type="evidence at protein level"/>
<accession>P50085</accession>
<accession>D6VV11</accession>
<protein>
    <recommendedName>
        <fullName>Prohibitin-2</fullName>
    </recommendedName>
</protein>
<comment type="function">
    <text evidence="2 3 9">Prohibitin probably acts as a holdase/unfoldase for the stabilization of newly synthesized mitochondrial proteins (PubMed:10835343). Involved in mitophagy; may act as an adapter for ATG8 that supports mitophagosome assembly (PubMed:38964378). Negatively regulates the proteolytic processing of ATG32 via the i-AAA protease (PubMed:38964378). Acts as a negative regulator of the m-AAA protease (PubMed:10207067).</text>
</comment>
<comment type="subunit">
    <text evidence="2 3 4 9">The mitochondrial prohibitin complex consists of two subunits (PHB1 and PHB2) (PubMed:10835343, PubMed:12237468). The subunits assemble into a membrane-associated ring-shaped supercomplex of approximately 1 mDa (PubMed:10835343, PubMed:12237468). The mitochondrial prohibitin complex interacts with the m-AAA protease, a heterohexamer composed of YTA12/RCA1 and YTA10/AFG3 (PubMed:10207067). The mitochondrial prohibitin complex interacts with ATG8 and the interaction may support mitophagosome assembly (PubMed:38964378).</text>
</comment>
<comment type="interaction">
    <interactant intactId="EBI-23530">
        <id>P50085</id>
    </interactant>
    <interactant intactId="EBI-13360">
        <id>P40961</id>
        <label>PHB1</label>
    </interactant>
    <organismsDiffer>false</organismsDiffer>
    <experiments>4</experiments>
</comment>
<comment type="subcellular location">
    <subcellularLocation>
        <location evidence="2 5 7 8 9">Mitochondrion inner membrane</location>
        <topology evidence="5 7 8">Single-pass type II membrane protein</topology>
        <orientation evidence="5 7 8">Intermembrane side</orientation>
    </subcellularLocation>
</comment>
<comment type="PTM">
    <text>The N-terminus is blocked.</text>
</comment>
<comment type="disruption phenotype">
    <text evidence="9">Impairs mitophagy.</text>
</comment>
<comment type="miscellaneous">
    <text evidence="6">Present with 2850 molecules/cell in log phase SD medium.</text>
</comment>
<comment type="miscellaneous">
    <text>Mitochondrial targeting of PHB2 is ensured by a bipartite non-cleavable presequence at the N-terminus.</text>
</comment>
<comment type="similarity">
    <text evidence="10">Belongs to the prohibitin family.</text>
</comment>
<comment type="sequence caution" evidence="10">
    <conflict type="frameshift">
        <sequence resource="EMBL-CDS" id="CAA61181"/>
    </conflict>
</comment>
<comment type="sequence caution" evidence="10">
    <conflict type="frameshift">
        <sequence resource="EMBL-CDS" id="CAA97259"/>
    </conflict>
</comment>
<name>PHB2_YEAST</name>